<reference key="1">
    <citation type="submission" date="1996-06" db="EMBL/GenBank/DDBJ databases">
        <authorList>
            <person name="Ericsson M."/>
            <person name="Golovliov I."/>
            <person name="Sjoestedt A."/>
            <person name="Taernvik A."/>
        </authorList>
    </citation>
    <scope>NUCLEOTIDE SEQUENCE [GENOMIC DNA]</scope>
</reference>
<reference key="2">
    <citation type="submission" date="2006-03" db="EMBL/GenBank/DDBJ databases">
        <title>Complete genome sequence of Francisella tularensis LVS (Live Vaccine Strain).</title>
        <authorList>
            <person name="Chain P."/>
            <person name="Larimer F."/>
            <person name="Land M."/>
            <person name="Stilwagen S."/>
            <person name="Larsson P."/>
            <person name="Bearden S."/>
            <person name="Chu M."/>
            <person name="Oyston P."/>
            <person name="Forsman M."/>
            <person name="Andersson S."/>
            <person name="Lindler L."/>
            <person name="Titball R."/>
            <person name="Garcia E."/>
        </authorList>
    </citation>
    <scope>NUCLEOTIDE SEQUENCE [LARGE SCALE GENOMIC DNA]</scope>
    <source>
        <strain>LVS</strain>
    </source>
</reference>
<reference key="3">
    <citation type="journal article" date="1994" name="Infect. Immun.">
        <title>Increased synthesis of DnaK, GroEL, and GroES homologs by Francisella tularensis LVS in response to heat and hydrogen peroxide.</title>
        <authorList>
            <person name="Ericsson M."/>
            <person name="Taernvik A."/>
            <person name="Kuoppa K."/>
            <person name="Sandstroem G."/>
            <person name="Sjoestedt A."/>
        </authorList>
    </citation>
    <scope>PROTEIN SEQUENCE OF 1-15</scope>
</reference>
<dbReference type="EMBL" id="X98853">
    <property type="protein sequence ID" value="CAA67359.1"/>
    <property type="molecule type" value="Genomic_DNA"/>
</dbReference>
<dbReference type="EMBL" id="AM233362">
    <property type="protein sequence ID" value="CAJ80154.1"/>
    <property type="molecule type" value="Genomic_DNA"/>
</dbReference>
<dbReference type="RefSeq" id="WP_003017172.1">
    <property type="nucleotide sequence ID" value="NZ_CP009694.1"/>
</dbReference>
<dbReference type="SMR" id="P94797"/>
<dbReference type="KEGG" id="ftl:FTL_1715"/>
<dbReference type="Proteomes" id="UP000001944">
    <property type="component" value="Chromosome"/>
</dbReference>
<dbReference type="GO" id="GO:0005737">
    <property type="term" value="C:cytoplasm"/>
    <property type="evidence" value="ECO:0007669"/>
    <property type="project" value="UniProtKB-SubCell"/>
</dbReference>
<dbReference type="GO" id="GO:0005524">
    <property type="term" value="F:ATP binding"/>
    <property type="evidence" value="ECO:0007669"/>
    <property type="project" value="InterPro"/>
</dbReference>
<dbReference type="GO" id="GO:0046872">
    <property type="term" value="F:metal ion binding"/>
    <property type="evidence" value="ECO:0007669"/>
    <property type="project" value="TreeGrafter"/>
</dbReference>
<dbReference type="GO" id="GO:0044183">
    <property type="term" value="F:protein folding chaperone"/>
    <property type="evidence" value="ECO:0007669"/>
    <property type="project" value="InterPro"/>
</dbReference>
<dbReference type="GO" id="GO:0051087">
    <property type="term" value="F:protein-folding chaperone binding"/>
    <property type="evidence" value="ECO:0007669"/>
    <property type="project" value="TreeGrafter"/>
</dbReference>
<dbReference type="GO" id="GO:0051082">
    <property type="term" value="F:unfolded protein binding"/>
    <property type="evidence" value="ECO:0007669"/>
    <property type="project" value="TreeGrafter"/>
</dbReference>
<dbReference type="GO" id="GO:0051085">
    <property type="term" value="P:chaperone cofactor-dependent protein refolding"/>
    <property type="evidence" value="ECO:0007669"/>
    <property type="project" value="TreeGrafter"/>
</dbReference>
<dbReference type="CDD" id="cd00320">
    <property type="entry name" value="cpn10"/>
    <property type="match status" value="1"/>
</dbReference>
<dbReference type="FunFam" id="2.30.33.40:FF:000001">
    <property type="entry name" value="10 kDa chaperonin"/>
    <property type="match status" value="1"/>
</dbReference>
<dbReference type="Gene3D" id="2.30.33.40">
    <property type="entry name" value="GroES chaperonin"/>
    <property type="match status" value="1"/>
</dbReference>
<dbReference type="HAMAP" id="MF_00580">
    <property type="entry name" value="CH10"/>
    <property type="match status" value="1"/>
</dbReference>
<dbReference type="InterPro" id="IPR020818">
    <property type="entry name" value="Chaperonin_GroES"/>
</dbReference>
<dbReference type="InterPro" id="IPR037124">
    <property type="entry name" value="Chaperonin_GroES_sf"/>
</dbReference>
<dbReference type="InterPro" id="IPR018369">
    <property type="entry name" value="Chaprnonin_Cpn10_CS"/>
</dbReference>
<dbReference type="InterPro" id="IPR011032">
    <property type="entry name" value="GroES-like_sf"/>
</dbReference>
<dbReference type="NCBIfam" id="NF001527">
    <property type="entry name" value="PRK00364.1-2"/>
    <property type="match status" value="1"/>
</dbReference>
<dbReference type="NCBIfam" id="NF001531">
    <property type="entry name" value="PRK00364.2-2"/>
    <property type="match status" value="1"/>
</dbReference>
<dbReference type="NCBIfam" id="NF001533">
    <property type="entry name" value="PRK00364.2-4"/>
    <property type="match status" value="1"/>
</dbReference>
<dbReference type="PANTHER" id="PTHR10772">
    <property type="entry name" value="10 KDA HEAT SHOCK PROTEIN"/>
    <property type="match status" value="1"/>
</dbReference>
<dbReference type="PANTHER" id="PTHR10772:SF58">
    <property type="entry name" value="CO-CHAPERONIN GROES"/>
    <property type="match status" value="1"/>
</dbReference>
<dbReference type="Pfam" id="PF00166">
    <property type="entry name" value="Cpn10"/>
    <property type="match status" value="1"/>
</dbReference>
<dbReference type="PRINTS" id="PR00297">
    <property type="entry name" value="CHAPERONIN10"/>
</dbReference>
<dbReference type="SMART" id="SM00883">
    <property type="entry name" value="Cpn10"/>
    <property type="match status" value="1"/>
</dbReference>
<dbReference type="SUPFAM" id="SSF50129">
    <property type="entry name" value="GroES-like"/>
    <property type="match status" value="1"/>
</dbReference>
<dbReference type="PROSITE" id="PS00681">
    <property type="entry name" value="CHAPERONINS_CPN10"/>
    <property type="match status" value="1"/>
</dbReference>
<organism>
    <name type="scientific">Francisella tularensis subsp. holarctica (strain LVS)</name>
    <dbReference type="NCBI Taxonomy" id="376619"/>
    <lineage>
        <taxon>Bacteria</taxon>
        <taxon>Pseudomonadati</taxon>
        <taxon>Pseudomonadota</taxon>
        <taxon>Gammaproteobacteria</taxon>
        <taxon>Thiotrichales</taxon>
        <taxon>Francisellaceae</taxon>
        <taxon>Francisella</taxon>
    </lineage>
</organism>
<name>CH10_FRATH</name>
<comment type="function">
    <text evidence="1">Together with the chaperonin GroEL, plays an essential role in assisting protein folding. The GroEL-GroES system forms a nano-cage that allows encapsulation of the non-native substrate proteins and provides a physical environment optimized to promote and accelerate protein folding. GroES binds to the apical surface of the GroEL ring, thereby capping the opening of the GroEL channel.</text>
</comment>
<comment type="subunit">
    <text evidence="1">Heptamer of 7 subunits arranged in a ring. Interacts with the chaperonin GroEL.</text>
</comment>
<comment type="subcellular location">
    <subcellularLocation>
        <location evidence="1">Cytoplasm</location>
    </subcellularLocation>
</comment>
<comment type="similarity">
    <text evidence="1 2">Belongs to the GroES chaperonin family.</text>
</comment>
<accession>P94797</accession>
<accession>Q2A1Q6</accession>
<accession>Q9R521</accession>
<gene>
    <name evidence="1" type="primary">groES</name>
    <name evidence="1" type="synonym">groS</name>
    <name type="synonym">mopB</name>
    <name type="ordered locus">FTL_1715</name>
</gene>
<feature type="chain" id="PRO_0000174755" description="Co-chaperonin GroES">
    <location>
        <begin position="1"/>
        <end position="95"/>
    </location>
</feature>
<sequence length="95" mass="10272">MNIRPLQDRVLVRRAEEEKKSAGGIILTGNAQEKPSQGEVVAVGNGKKLDNGTTLPMDVKVGDKVLFGKYSGSEVKVGDETLLMMREEDIMGIIA</sequence>
<keyword id="KW-0143">Chaperone</keyword>
<keyword id="KW-0963">Cytoplasm</keyword>
<keyword id="KW-0903">Direct protein sequencing</keyword>
<keyword id="KW-1185">Reference proteome</keyword>
<evidence type="ECO:0000255" key="1">
    <source>
        <dbReference type="HAMAP-Rule" id="MF_00580"/>
    </source>
</evidence>
<evidence type="ECO:0000305" key="2"/>
<protein>
    <recommendedName>
        <fullName evidence="1">Co-chaperonin GroES</fullName>
    </recommendedName>
    <alternativeName>
        <fullName evidence="1">10 kDa chaperonin</fullName>
    </alternativeName>
    <alternativeName>
        <fullName evidence="1">Chaperonin-10</fullName>
        <shortName evidence="1">Cpn10</shortName>
    </alternativeName>
</protein>
<proteinExistence type="evidence at protein level"/>